<proteinExistence type="evidence at protein level"/>
<gene>
    <name evidence="8" type="primary">Ywhag</name>
</gene>
<sequence length="247" mass="28303">MVDREQLVQKARLAEQAERYDDMAAAMKNVTELNEPLSNEERNLLSVAYKNVVGARRSSWRVISSIEQKTSADGNEKKIEMVRAYREKIEKELEAVCQDVLSLLDNYLIKNCSETQYESKVFYLKMKGDYYRYLAEVATGEKRATVVESSEKAYSEAHEISKEHMQPTHPIRLGLALNYSVFYYEIQNAPEQACHLAKTAFDDAIAELDTLNEDSYKDSTLIMQLLRDNLTLWTSDQQDDDGGEGNN</sequence>
<evidence type="ECO:0000250" key="1">
    <source>
        <dbReference type="UniProtKB" id="P61981"/>
    </source>
</evidence>
<evidence type="ECO:0000250" key="2">
    <source>
        <dbReference type="UniProtKB" id="P61983"/>
    </source>
</evidence>
<evidence type="ECO:0000269" key="3">
    <source>
    </source>
</evidence>
<evidence type="ECO:0000269" key="4">
    <source>
    </source>
</evidence>
<evidence type="ECO:0000269" key="5">
    <source>
    </source>
</evidence>
<evidence type="ECO:0000269" key="6">
    <source>
    </source>
</evidence>
<evidence type="ECO:0000305" key="7"/>
<evidence type="ECO:0000312" key="8">
    <source>
        <dbReference type="MGI" id="MGI:108109"/>
    </source>
</evidence>
<evidence type="ECO:0007744" key="9">
    <source>
    </source>
</evidence>
<evidence type="ECO:0007829" key="10">
    <source>
        <dbReference type="PDB" id="8XI3"/>
    </source>
</evidence>
<dbReference type="EMBL" id="AF058799">
    <property type="protein sequence ID" value="AAC14345.1"/>
    <property type="molecule type" value="mRNA"/>
</dbReference>
<dbReference type="EMBL" id="CT010208">
    <property type="protein sequence ID" value="CAJ18416.1"/>
    <property type="molecule type" value="mRNA"/>
</dbReference>
<dbReference type="EMBL" id="AK088847">
    <property type="protein sequence ID" value="BAC40609.1"/>
    <property type="molecule type" value="mRNA"/>
</dbReference>
<dbReference type="EMBL" id="AK148618">
    <property type="protein sequence ID" value="BAE28625.1"/>
    <property type="status" value="ALT_INIT"/>
    <property type="molecule type" value="mRNA"/>
</dbReference>
<dbReference type="EMBL" id="AK153307">
    <property type="protein sequence ID" value="BAE31888.1"/>
    <property type="molecule type" value="mRNA"/>
</dbReference>
<dbReference type="EMBL" id="AK164356">
    <property type="protein sequence ID" value="BAE37756.1"/>
    <property type="molecule type" value="mRNA"/>
</dbReference>
<dbReference type="EMBL" id="BC008129">
    <property type="protein sequence ID" value="AAH08129.1"/>
    <property type="molecule type" value="mRNA"/>
</dbReference>
<dbReference type="CCDS" id="CCDS19748.1"/>
<dbReference type="RefSeq" id="NP_061359.2">
    <property type="nucleotide sequence ID" value="NM_018871.3"/>
</dbReference>
<dbReference type="PDB" id="8XI3">
    <property type="method" value="EM"/>
    <property type="resolution" value="3.00 A"/>
    <property type="chains" value="D/F=1-247"/>
</dbReference>
<dbReference type="PDBsum" id="8XI3"/>
<dbReference type="EMDB" id="EMD-38369"/>
<dbReference type="SMR" id="P61982"/>
<dbReference type="BioGRID" id="204620">
    <property type="interactions" value="63"/>
</dbReference>
<dbReference type="FunCoup" id="P61982">
    <property type="interactions" value="2030"/>
</dbReference>
<dbReference type="IntAct" id="P61982">
    <property type="interactions" value="31"/>
</dbReference>
<dbReference type="MINT" id="P61982"/>
<dbReference type="STRING" id="10090.ENSMUSP00000051223"/>
<dbReference type="GlyGen" id="P61982">
    <property type="glycosylation" value="2 sites, 1 N-linked glycan (1 site), 1 O-linked glycan (1 site)"/>
</dbReference>
<dbReference type="iPTMnet" id="P61982"/>
<dbReference type="PhosphoSitePlus" id="P61982"/>
<dbReference type="SwissPalm" id="P61982"/>
<dbReference type="REPRODUCTION-2DPAGE" id="P61982"/>
<dbReference type="CPTAC" id="non-CPTAC-3956"/>
<dbReference type="CPTAC" id="non-CPTAC-3957"/>
<dbReference type="jPOST" id="P61982"/>
<dbReference type="PaxDb" id="10090-ENSMUSP00000051223"/>
<dbReference type="ProteomicsDB" id="285812"/>
<dbReference type="Pumba" id="P61982"/>
<dbReference type="Antibodypedia" id="4339">
    <property type="antibodies" value="568 antibodies from 42 providers"/>
</dbReference>
<dbReference type="DNASU" id="22628"/>
<dbReference type="Ensembl" id="ENSMUST00000055808.6">
    <property type="protein sequence ID" value="ENSMUSP00000051223.6"/>
    <property type="gene ID" value="ENSMUSG00000051391.10"/>
</dbReference>
<dbReference type="Ensembl" id="ENSMUST00000198270.2">
    <property type="protein sequence ID" value="ENSMUSP00000143631.2"/>
    <property type="gene ID" value="ENSMUSG00000051391.10"/>
</dbReference>
<dbReference type="GeneID" id="22628"/>
<dbReference type="KEGG" id="mmu:22628"/>
<dbReference type="UCSC" id="uc008zzf.2">
    <property type="organism name" value="mouse"/>
</dbReference>
<dbReference type="AGR" id="MGI:108109"/>
<dbReference type="CTD" id="7532"/>
<dbReference type="MGI" id="MGI:108109">
    <property type="gene designation" value="Ywhag"/>
</dbReference>
<dbReference type="VEuPathDB" id="HostDB:ENSMUSG00000051391"/>
<dbReference type="eggNOG" id="KOG0841">
    <property type="taxonomic scope" value="Eukaryota"/>
</dbReference>
<dbReference type="GeneTree" id="ENSGT01090000260040"/>
<dbReference type="InParanoid" id="P61982"/>
<dbReference type="OMA" id="AYGEAHE"/>
<dbReference type="OrthoDB" id="10260625at2759"/>
<dbReference type="PhylomeDB" id="P61982"/>
<dbReference type="TreeFam" id="TF102003"/>
<dbReference type="Reactome" id="R-MMU-111447">
    <property type="pathway name" value="Activation of BAD and translocation to mitochondria"/>
</dbReference>
<dbReference type="Reactome" id="R-MMU-2565942">
    <property type="pathway name" value="Regulation of PLK1 Activity at G2/M Transition"/>
</dbReference>
<dbReference type="Reactome" id="R-MMU-380259">
    <property type="pathway name" value="Loss of Nlp from mitotic centrosomes"/>
</dbReference>
<dbReference type="Reactome" id="R-MMU-380270">
    <property type="pathway name" value="Recruitment of mitotic centrosome proteins and complexes"/>
</dbReference>
<dbReference type="Reactome" id="R-MMU-380284">
    <property type="pathway name" value="Loss of proteins required for interphase microtubule organization from the centrosome"/>
</dbReference>
<dbReference type="Reactome" id="R-MMU-380320">
    <property type="pathway name" value="Recruitment of NuMA to mitotic centrosomes"/>
</dbReference>
<dbReference type="Reactome" id="R-MMU-5620912">
    <property type="pathway name" value="Anchoring of the basal body to the plasma membrane"/>
</dbReference>
<dbReference type="Reactome" id="R-MMU-5625740">
    <property type="pathway name" value="RHO GTPases activate PKNs"/>
</dbReference>
<dbReference type="Reactome" id="R-MMU-5628897">
    <property type="pathway name" value="TP53 Regulates Metabolic Genes"/>
</dbReference>
<dbReference type="Reactome" id="R-MMU-75035">
    <property type="pathway name" value="Chk1/Chk2(Cds1) mediated inactivation of Cyclin B:Cdk1 complex"/>
</dbReference>
<dbReference type="Reactome" id="R-MMU-8854518">
    <property type="pathway name" value="AURKA Activation by TPX2"/>
</dbReference>
<dbReference type="Reactome" id="R-MMU-9614399">
    <property type="pathway name" value="Regulation of localization of FOXO transcription factors"/>
</dbReference>
<dbReference type="BioGRID-ORCS" id="22628">
    <property type="hits" value="6 hits in 113 CRISPR screens"/>
</dbReference>
<dbReference type="CD-CODE" id="CE726F99">
    <property type="entry name" value="Postsynaptic density"/>
</dbReference>
<dbReference type="ChiTaRS" id="Ywhag">
    <property type="organism name" value="mouse"/>
</dbReference>
<dbReference type="PRO" id="PR:P61982"/>
<dbReference type="Proteomes" id="UP000000589">
    <property type="component" value="Chromosome 5"/>
</dbReference>
<dbReference type="RNAct" id="P61982">
    <property type="molecule type" value="protein"/>
</dbReference>
<dbReference type="Bgee" id="ENSMUSG00000051391">
    <property type="expression patterns" value="Expressed in CA3 field of hippocampus and 274 other cell types or tissues"/>
</dbReference>
<dbReference type="ExpressionAtlas" id="P61982">
    <property type="expression patterns" value="baseline and differential"/>
</dbReference>
<dbReference type="GO" id="GO:0005737">
    <property type="term" value="C:cytoplasm"/>
    <property type="evidence" value="ECO:0000314"/>
    <property type="project" value="UniProtKB"/>
</dbReference>
<dbReference type="GO" id="GO:0005829">
    <property type="term" value="C:cytosol"/>
    <property type="evidence" value="ECO:0000304"/>
    <property type="project" value="Reactome"/>
</dbReference>
<dbReference type="GO" id="GO:0005759">
    <property type="term" value="C:mitochondrial matrix"/>
    <property type="evidence" value="ECO:0007669"/>
    <property type="project" value="UniProtKB-SubCell"/>
</dbReference>
<dbReference type="GO" id="GO:0043209">
    <property type="term" value="C:myelin sheath"/>
    <property type="evidence" value="ECO:0007005"/>
    <property type="project" value="UniProtKB"/>
</dbReference>
<dbReference type="GO" id="GO:0005634">
    <property type="term" value="C:nucleus"/>
    <property type="evidence" value="ECO:0007669"/>
    <property type="project" value="Ensembl"/>
</dbReference>
<dbReference type="GO" id="GO:0003779">
    <property type="term" value="F:actin binding"/>
    <property type="evidence" value="ECO:0000250"/>
    <property type="project" value="UniProtKB"/>
</dbReference>
<dbReference type="GO" id="GO:0042802">
    <property type="term" value="F:identical protein binding"/>
    <property type="evidence" value="ECO:0007669"/>
    <property type="project" value="Ensembl"/>
</dbReference>
<dbReference type="GO" id="GO:0005159">
    <property type="term" value="F:insulin-like growth factor receptor binding"/>
    <property type="evidence" value="ECO:0000250"/>
    <property type="project" value="UniProtKB"/>
</dbReference>
<dbReference type="GO" id="GO:0140031">
    <property type="term" value="F:phosphorylation-dependent protein binding"/>
    <property type="evidence" value="ECO:0000250"/>
    <property type="project" value="UniProtKB"/>
</dbReference>
<dbReference type="GO" id="GO:0019904">
    <property type="term" value="F:protein domain specific binding"/>
    <property type="evidence" value="ECO:0000314"/>
    <property type="project" value="MGI"/>
</dbReference>
<dbReference type="GO" id="GO:0005080">
    <property type="term" value="F:protein kinase C binding"/>
    <property type="evidence" value="ECO:0000250"/>
    <property type="project" value="UniProtKB"/>
</dbReference>
<dbReference type="GO" id="GO:0140311">
    <property type="term" value="F:protein sequestering activity"/>
    <property type="evidence" value="ECO:0000250"/>
    <property type="project" value="UniProtKB"/>
</dbReference>
<dbReference type="GO" id="GO:0042149">
    <property type="term" value="P:cellular response to glucose starvation"/>
    <property type="evidence" value="ECO:0007669"/>
    <property type="project" value="Ensembl"/>
</dbReference>
<dbReference type="GO" id="GO:1904262">
    <property type="term" value="P:negative regulation of TORC1 signaling"/>
    <property type="evidence" value="ECO:0007669"/>
    <property type="project" value="Ensembl"/>
</dbReference>
<dbReference type="GO" id="GO:0022409">
    <property type="term" value="P:positive regulation of cell-cell adhesion"/>
    <property type="evidence" value="ECO:0000250"/>
    <property type="project" value="UniProtKB"/>
</dbReference>
<dbReference type="GO" id="GO:0050870">
    <property type="term" value="P:positive regulation of T cell activation"/>
    <property type="evidence" value="ECO:0007669"/>
    <property type="project" value="Ensembl"/>
</dbReference>
<dbReference type="GO" id="GO:0002842">
    <property type="term" value="P:positive regulation of T cell mediated immune response to tumor cell"/>
    <property type="evidence" value="ECO:0007669"/>
    <property type="project" value="Ensembl"/>
</dbReference>
<dbReference type="GO" id="GO:0006605">
    <property type="term" value="P:protein targeting"/>
    <property type="evidence" value="ECO:0000314"/>
    <property type="project" value="MGI"/>
</dbReference>
<dbReference type="GO" id="GO:0045664">
    <property type="term" value="P:regulation of neuron differentiation"/>
    <property type="evidence" value="ECO:0000250"/>
    <property type="project" value="UniProtKB"/>
</dbReference>
<dbReference type="GO" id="GO:0032880">
    <property type="term" value="P:regulation of protein localization"/>
    <property type="evidence" value="ECO:0000250"/>
    <property type="project" value="UniProtKB"/>
</dbReference>
<dbReference type="GO" id="GO:0048167">
    <property type="term" value="P:regulation of synaptic plasticity"/>
    <property type="evidence" value="ECO:0000250"/>
    <property type="project" value="UniProtKB"/>
</dbReference>
<dbReference type="CDD" id="cd10024">
    <property type="entry name" value="14-3-3_gamma"/>
    <property type="match status" value="1"/>
</dbReference>
<dbReference type="FunFam" id="1.20.190.20:FF:000001">
    <property type="entry name" value="14-3-3 gamma 1"/>
    <property type="match status" value="1"/>
</dbReference>
<dbReference type="Gene3D" id="1.20.190.20">
    <property type="entry name" value="14-3-3 domain"/>
    <property type="match status" value="1"/>
</dbReference>
<dbReference type="InterPro" id="IPR000308">
    <property type="entry name" value="14-3-3"/>
</dbReference>
<dbReference type="InterPro" id="IPR023409">
    <property type="entry name" value="14-3-3_CS"/>
</dbReference>
<dbReference type="InterPro" id="IPR036815">
    <property type="entry name" value="14-3-3_dom_sf"/>
</dbReference>
<dbReference type="InterPro" id="IPR023410">
    <property type="entry name" value="14-3-3_domain"/>
</dbReference>
<dbReference type="PANTHER" id="PTHR18860">
    <property type="entry name" value="14-3-3 PROTEIN"/>
    <property type="match status" value="1"/>
</dbReference>
<dbReference type="Pfam" id="PF00244">
    <property type="entry name" value="14-3-3"/>
    <property type="match status" value="1"/>
</dbReference>
<dbReference type="PIRSF" id="PIRSF000868">
    <property type="entry name" value="14-3-3"/>
    <property type="match status" value="1"/>
</dbReference>
<dbReference type="PRINTS" id="PR00305">
    <property type="entry name" value="1433ZETA"/>
</dbReference>
<dbReference type="SMART" id="SM00101">
    <property type="entry name" value="14_3_3"/>
    <property type="match status" value="1"/>
</dbReference>
<dbReference type="SUPFAM" id="SSF48445">
    <property type="entry name" value="14-3-3 protein"/>
    <property type="match status" value="1"/>
</dbReference>
<dbReference type="PROSITE" id="PS00796">
    <property type="entry name" value="1433_1"/>
    <property type="match status" value="1"/>
</dbReference>
<dbReference type="PROSITE" id="PS00797">
    <property type="entry name" value="1433_2"/>
    <property type="match status" value="1"/>
</dbReference>
<keyword id="KW-0002">3D-structure</keyword>
<keyword id="KW-0007">Acetylation</keyword>
<keyword id="KW-0963">Cytoplasm</keyword>
<keyword id="KW-0903">Direct protein sequencing</keyword>
<keyword id="KW-0496">Mitochondrion</keyword>
<keyword id="KW-0597">Phosphoprotein</keyword>
<keyword id="KW-1185">Reference proteome</keyword>
<reference key="1">
    <citation type="submission" date="1998-04" db="EMBL/GenBank/DDBJ databases">
        <authorList>
            <person name="Karpitskiy V.V."/>
            <person name="Shaw A.S."/>
        </authorList>
    </citation>
    <scope>NUCLEOTIDE SEQUENCE [MRNA]</scope>
    <source>
        <strain>C57BL/6J</strain>
    </source>
</reference>
<reference key="2">
    <citation type="submission" date="2005-07" db="EMBL/GenBank/DDBJ databases">
        <title>Cloning of mouse full open reading frames in Gateway(R) system entry vector (pDONR201).</title>
        <authorList>
            <person name="Ebert L."/>
            <person name="Muenstermann E."/>
            <person name="Schatten R."/>
            <person name="Henze S."/>
            <person name="Bohn E."/>
            <person name="Mollenhauer J."/>
            <person name="Wiemann S."/>
            <person name="Schick M."/>
            <person name="Korn B."/>
        </authorList>
    </citation>
    <scope>NUCLEOTIDE SEQUENCE [LARGE SCALE MRNA]</scope>
</reference>
<reference key="3">
    <citation type="journal article" date="2005" name="Science">
        <title>The transcriptional landscape of the mammalian genome.</title>
        <authorList>
            <person name="Carninci P."/>
            <person name="Kasukawa T."/>
            <person name="Katayama S."/>
            <person name="Gough J."/>
            <person name="Frith M.C."/>
            <person name="Maeda N."/>
            <person name="Oyama R."/>
            <person name="Ravasi T."/>
            <person name="Lenhard B."/>
            <person name="Wells C."/>
            <person name="Kodzius R."/>
            <person name="Shimokawa K."/>
            <person name="Bajic V.B."/>
            <person name="Brenner S.E."/>
            <person name="Batalov S."/>
            <person name="Forrest A.R."/>
            <person name="Zavolan M."/>
            <person name="Davis M.J."/>
            <person name="Wilming L.G."/>
            <person name="Aidinis V."/>
            <person name="Allen J.E."/>
            <person name="Ambesi-Impiombato A."/>
            <person name="Apweiler R."/>
            <person name="Aturaliya R.N."/>
            <person name="Bailey T.L."/>
            <person name="Bansal M."/>
            <person name="Baxter L."/>
            <person name="Beisel K.W."/>
            <person name="Bersano T."/>
            <person name="Bono H."/>
            <person name="Chalk A.M."/>
            <person name="Chiu K.P."/>
            <person name="Choudhary V."/>
            <person name="Christoffels A."/>
            <person name="Clutterbuck D.R."/>
            <person name="Crowe M.L."/>
            <person name="Dalla E."/>
            <person name="Dalrymple B.P."/>
            <person name="de Bono B."/>
            <person name="Della Gatta G."/>
            <person name="di Bernardo D."/>
            <person name="Down T."/>
            <person name="Engstrom P."/>
            <person name="Fagiolini M."/>
            <person name="Faulkner G."/>
            <person name="Fletcher C.F."/>
            <person name="Fukushima T."/>
            <person name="Furuno M."/>
            <person name="Futaki S."/>
            <person name="Gariboldi M."/>
            <person name="Georgii-Hemming P."/>
            <person name="Gingeras T.R."/>
            <person name="Gojobori T."/>
            <person name="Green R.E."/>
            <person name="Gustincich S."/>
            <person name="Harbers M."/>
            <person name="Hayashi Y."/>
            <person name="Hensch T.K."/>
            <person name="Hirokawa N."/>
            <person name="Hill D."/>
            <person name="Huminiecki L."/>
            <person name="Iacono M."/>
            <person name="Ikeo K."/>
            <person name="Iwama A."/>
            <person name="Ishikawa T."/>
            <person name="Jakt M."/>
            <person name="Kanapin A."/>
            <person name="Katoh M."/>
            <person name="Kawasawa Y."/>
            <person name="Kelso J."/>
            <person name="Kitamura H."/>
            <person name="Kitano H."/>
            <person name="Kollias G."/>
            <person name="Krishnan S.P."/>
            <person name="Kruger A."/>
            <person name="Kummerfeld S.K."/>
            <person name="Kurochkin I.V."/>
            <person name="Lareau L.F."/>
            <person name="Lazarevic D."/>
            <person name="Lipovich L."/>
            <person name="Liu J."/>
            <person name="Liuni S."/>
            <person name="McWilliam S."/>
            <person name="Madan Babu M."/>
            <person name="Madera M."/>
            <person name="Marchionni L."/>
            <person name="Matsuda H."/>
            <person name="Matsuzawa S."/>
            <person name="Miki H."/>
            <person name="Mignone F."/>
            <person name="Miyake S."/>
            <person name="Morris K."/>
            <person name="Mottagui-Tabar S."/>
            <person name="Mulder N."/>
            <person name="Nakano N."/>
            <person name="Nakauchi H."/>
            <person name="Ng P."/>
            <person name="Nilsson R."/>
            <person name="Nishiguchi S."/>
            <person name="Nishikawa S."/>
            <person name="Nori F."/>
            <person name="Ohara O."/>
            <person name="Okazaki Y."/>
            <person name="Orlando V."/>
            <person name="Pang K.C."/>
            <person name="Pavan W.J."/>
            <person name="Pavesi G."/>
            <person name="Pesole G."/>
            <person name="Petrovsky N."/>
            <person name="Piazza S."/>
            <person name="Reed J."/>
            <person name="Reid J.F."/>
            <person name="Ring B.Z."/>
            <person name="Ringwald M."/>
            <person name="Rost B."/>
            <person name="Ruan Y."/>
            <person name="Salzberg S.L."/>
            <person name="Sandelin A."/>
            <person name="Schneider C."/>
            <person name="Schoenbach C."/>
            <person name="Sekiguchi K."/>
            <person name="Semple C.A."/>
            <person name="Seno S."/>
            <person name="Sessa L."/>
            <person name="Sheng Y."/>
            <person name="Shibata Y."/>
            <person name="Shimada H."/>
            <person name="Shimada K."/>
            <person name="Silva D."/>
            <person name="Sinclair B."/>
            <person name="Sperling S."/>
            <person name="Stupka E."/>
            <person name="Sugiura K."/>
            <person name="Sultana R."/>
            <person name="Takenaka Y."/>
            <person name="Taki K."/>
            <person name="Tammoja K."/>
            <person name="Tan S.L."/>
            <person name="Tang S."/>
            <person name="Taylor M.S."/>
            <person name="Tegner J."/>
            <person name="Teichmann S.A."/>
            <person name="Ueda H.R."/>
            <person name="van Nimwegen E."/>
            <person name="Verardo R."/>
            <person name="Wei C.L."/>
            <person name="Yagi K."/>
            <person name="Yamanishi H."/>
            <person name="Zabarovsky E."/>
            <person name="Zhu S."/>
            <person name="Zimmer A."/>
            <person name="Hide W."/>
            <person name="Bult C."/>
            <person name="Grimmond S.M."/>
            <person name="Teasdale R.D."/>
            <person name="Liu E.T."/>
            <person name="Brusic V."/>
            <person name="Quackenbush J."/>
            <person name="Wahlestedt C."/>
            <person name="Mattick J.S."/>
            <person name="Hume D.A."/>
            <person name="Kai C."/>
            <person name="Sasaki D."/>
            <person name="Tomaru Y."/>
            <person name="Fukuda S."/>
            <person name="Kanamori-Katayama M."/>
            <person name="Suzuki M."/>
            <person name="Aoki J."/>
            <person name="Arakawa T."/>
            <person name="Iida J."/>
            <person name="Imamura K."/>
            <person name="Itoh M."/>
            <person name="Kato T."/>
            <person name="Kawaji H."/>
            <person name="Kawagashira N."/>
            <person name="Kawashima T."/>
            <person name="Kojima M."/>
            <person name="Kondo S."/>
            <person name="Konno H."/>
            <person name="Nakano K."/>
            <person name="Ninomiya N."/>
            <person name="Nishio T."/>
            <person name="Okada M."/>
            <person name="Plessy C."/>
            <person name="Shibata K."/>
            <person name="Shiraki T."/>
            <person name="Suzuki S."/>
            <person name="Tagami M."/>
            <person name="Waki K."/>
            <person name="Watahiki A."/>
            <person name="Okamura-Oho Y."/>
            <person name="Suzuki H."/>
            <person name="Kawai J."/>
            <person name="Hayashizaki Y."/>
        </authorList>
    </citation>
    <scope>NUCLEOTIDE SEQUENCE [LARGE SCALE MRNA]</scope>
    <source>
        <strain>NOD</strain>
        <tissue>Thymus</tissue>
    </source>
</reference>
<reference key="4">
    <citation type="journal article" date="2004" name="Genome Res.">
        <title>The status, quality, and expansion of the NIH full-length cDNA project: the Mammalian Gene Collection (MGC).</title>
        <authorList>
            <consortium name="The MGC Project Team"/>
        </authorList>
    </citation>
    <scope>NUCLEOTIDE SEQUENCE [LARGE SCALE MRNA]</scope>
    <source>
        <strain>FVB/N</strain>
        <tissue>Mammary tumor</tissue>
    </source>
</reference>
<reference key="5">
    <citation type="submission" date="2009-01" db="UniProtKB">
        <authorList>
            <person name="Lubec G."/>
            <person name="Kang S.U."/>
            <person name="Klug S."/>
            <person name="Friebe K."/>
            <person name="Sunyer B."/>
            <person name="Chen W.-Q."/>
        </authorList>
    </citation>
    <scope>PROTEIN SEQUENCE OF 13-50; 43-56; 62-69; 78-83; 92-120 AND 133-247</scope>
    <scope>IDENTIFICATION BY MASS SPECTROMETRY</scope>
    <source>
        <strain>C57BL/6J</strain>
        <strain>OF1</strain>
        <tissue>Brain</tissue>
        <tissue>Hippocampus</tissue>
    </source>
</reference>
<reference key="6">
    <citation type="journal article" date="2008" name="J. Proteome Res.">
        <title>Large-scale identification and evolution indexing of tyrosine phosphorylation sites from murine brain.</title>
        <authorList>
            <person name="Ballif B.A."/>
            <person name="Carey G.R."/>
            <person name="Sunyaev S.R."/>
            <person name="Gygi S.P."/>
        </authorList>
    </citation>
    <scope>IDENTIFICATION BY MASS SPECTROMETRY [LARGE SCALE ANALYSIS]</scope>
    <source>
        <tissue>Brain</tissue>
    </source>
</reference>
<reference key="7">
    <citation type="journal article" date="2010" name="Cell">
        <title>A tissue-specific atlas of mouse protein phosphorylation and expression.</title>
        <authorList>
            <person name="Huttlin E.L."/>
            <person name="Jedrychowski M.P."/>
            <person name="Elias J.E."/>
            <person name="Goswami T."/>
            <person name="Rad R."/>
            <person name="Beausoleil S.A."/>
            <person name="Villen J."/>
            <person name="Haas W."/>
            <person name="Sowa M.E."/>
            <person name="Gygi S.P."/>
        </authorList>
    </citation>
    <scope>PHOSPHORYLATION [LARGE SCALE ANALYSIS] AT SER-71</scope>
    <scope>IDENTIFICATION BY MASS SPECTROMETRY [LARGE SCALE ANALYSIS]</scope>
    <source>
        <tissue>Brain</tissue>
        <tissue>Brown adipose tissue</tissue>
        <tissue>Heart</tissue>
        <tissue>Kidney</tissue>
        <tissue>Liver</tissue>
        <tissue>Lung</tissue>
        <tissue>Pancreas</tissue>
        <tissue>Spleen</tissue>
        <tissue>Testis</tissue>
    </source>
</reference>
<reference key="8">
    <citation type="journal article" date="2010" name="Int. J. Biochem. Cell Biol.">
        <title>SLy2 targets the nuclear SAP30/HDAC1 complex.</title>
        <authorList>
            <person name="Brandt S."/>
            <person name="Ellwanger K."/>
            <person name="Beuter-Gunia C."/>
            <person name="Schuster M."/>
            <person name="Hausser A."/>
            <person name="Schmitz I."/>
            <person name="Beer-Hammer S."/>
        </authorList>
    </citation>
    <scope>INTERACTION WITH SAMSN1</scope>
</reference>
<reference key="9">
    <citation type="journal article" date="2015" name="Biochem. Biophys. Res. Commun.">
        <title>Suppression of death-associated protein kinase 2 by interaction with 14-3-3 proteins.</title>
        <authorList>
            <person name="Yuasa K."/>
            <person name="Ota R."/>
            <person name="Matsuda S."/>
            <person name="Isshiki K."/>
            <person name="Inoue M."/>
            <person name="Tsuji A."/>
        </authorList>
    </citation>
    <scope>INTERACTION WITH DAPK2</scope>
</reference>
<reference key="10">
    <citation type="journal article" date="2017" name="Mol. Brain">
        <title>Direct interaction with 14-3-3gamma promotes surface expression of Best1 channel in astrocyte.</title>
        <authorList>
            <person name="Oh S.J."/>
            <person name="Woo J."/>
            <person name="Lee Y.S."/>
            <person name="Cho M."/>
            <person name="Kim E."/>
            <person name="Cho N.C."/>
            <person name="Park J.Y."/>
            <person name="Pae A.N."/>
            <person name="Justin Lee C."/>
            <person name="Hwang E.M."/>
        </authorList>
    </citation>
    <scope>FUNCTION</scope>
    <scope>INTERACTION WITH BEST1</scope>
</reference>
<reference key="11">
    <citation type="journal article" date="2018" name="J. Cell Sci.">
        <title>14-3-3 proteins regulate desmosomal adhesion via plakophilins.</title>
        <authorList>
            <person name="Rietscher K."/>
            <person name="Keil R."/>
            <person name="Jordan A."/>
            <person name="Hatzfeld M."/>
        </authorList>
    </citation>
    <scope>SUBCELLULAR LOCATION</scope>
    <scope>TISSUE SPECIFICITY</scope>
</reference>
<comment type="function">
    <text evidence="1 5">Adapter protein implicated in the regulation of a large spectrum of both general and specialized signaling pathways. Binds to a large number of partners, usually by recognition of a phosphoserine or phosphothreonine motif. Binding generally results in the modulation of the activity of the binding partner. Promotes inactivation of WDR24 component of the GATOR2 complex by binding to phosphorylated WDR24 (By similarity). Participates in the positive regulation of NMDA glutamate receptor activity by promoting the L-glutamate secretion through interaction with BEST1 (PubMed:29121962). Reduces keratinocyte intercellular adhesion, via interacting with PKP1 and sequestering it in the cytoplasm, thereby reducing its incorporation into desmosomes (By similarity). Plays a role in mitochondrial protein catabolic process (also named MALM) that promotes the degradation of damaged proteins inside mitochondria (By similarity).</text>
</comment>
<comment type="subunit">
    <text evidence="1 2 3 4 5">Homodimer (By similarity). Part of a complex that contains DSG3, PKP1, YAP1 and YWHAG; the complex is required for localization of DSG3 and YAP1 to the cell membrane in keratinocytes (By similarity). Interacts with SAMSN1 (PubMed:20478393). Interacts with RAF1, SSH1 and CRTC2/TORC2 (By similarity). Interacts with ABL1 (phosphorylated form); the interaction retains it in the cytoplasm (By similarity). Interacts with GAB2 (By similarity). Interacts with MDM4 (phosphorylated); negatively regulates MDM4 activity toward TP53 (By similarity). Interacts with PKA-phosphorylated AANAT and SIRT2 (By similarity). Interacts with the 'Thr-369' phosphorylated form of DAPK2 (PubMed:26047703). Interacts with PI4KB, TBC1D22A and TBC1D22B (By similarity). Interacts with SLITRK1 (By similarity). Interacts with LRRK2; this interaction is dependent on LRRK2 phosphorylation (By similarity). Interacts with MARK2 and MARK3 (By similarity). Interacts with MEFV (By similarity). Interacts with ENDOG, TSC2 and PIK3C3; interaction with ENDOG weakens its interaction with TSC2 and PIK3C3 (By similarity). Interacts with (phosphorylated) WDR24 (By similarity). Interacts with BEST1; this interaction promotes L-glutamate channel activity leading to the positive regulation of NMDA glutamate receptor activity through the L-glutamate secretion (PubMed:29121962). Interacts with PKP1 (when phosphorylated); the interaction results in translocation of PKP1 to the cytoplasm and loss of intercellular adhesion in keratinocytes (By similarity). Interacts with SPATA18/MIEAP; a protein that also plays a role in MALM (By similarity).</text>
</comment>
<comment type="interaction">
    <interactant intactId="EBI-359843">
        <id>P61982</id>
    </interactant>
    <interactant intactId="EBI-1633915">
        <id>Q08460</id>
        <label>Kcnma1</label>
    </interactant>
    <organismsDiffer>false</organismsDiffer>
    <experiments>4</experiments>
</comment>
<comment type="interaction">
    <interactant intactId="EBI-359843">
        <id>P61982</id>
    </interactant>
    <interactant intactId="EBI-2693710">
        <id>Q5S006</id>
        <label>Lrrk2</label>
    </interactant>
    <organismsDiffer>false</organismsDiffer>
    <experiments>10</experiments>
</comment>
<comment type="subcellular location">
    <subcellularLocation>
        <location evidence="6">Cytoplasm</location>
        <location evidence="6">Cytosol</location>
    </subcellularLocation>
    <subcellularLocation>
        <location evidence="1">Mitochondrion matrix</location>
    </subcellularLocation>
    <text evidence="1">Translocates to the mitochondrial matrix following induction of MALM (mitochondrial protein catabolic process).</text>
</comment>
<comment type="tissue specificity">
    <text evidence="6">Expressed in dorsal skin (at protein level).</text>
</comment>
<comment type="PTM">
    <text evidence="1">Phosphorylated by various PKC isozymes.</text>
</comment>
<comment type="similarity">
    <text evidence="7">Belongs to the 14-3-3 family.</text>
</comment>
<comment type="sequence caution" evidence="7">
    <conflict type="erroneous initiation">
        <sequence resource="EMBL-CDS" id="BAE28625"/>
    </conflict>
    <text>Extended N-terminus.</text>
</comment>
<name>1433G_MOUSE</name>
<protein>
    <recommendedName>
        <fullName evidence="7">14-3-3 protein gamma</fullName>
    </recommendedName>
    <component>
        <recommendedName>
            <fullName>14-3-3 protein gamma, N-terminally processed</fullName>
        </recommendedName>
    </component>
</protein>
<organism>
    <name type="scientific">Mus musculus</name>
    <name type="common">Mouse</name>
    <dbReference type="NCBI Taxonomy" id="10090"/>
    <lineage>
        <taxon>Eukaryota</taxon>
        <taxon>Metazoa</taxon>
        <taxon>Chordata</taxon>
        <taxon>Craniata</taxon>
        <taxon>Vertebrata</taxon>
        <taxon>Euteleostomi</taxon>
        <taxon>Mammalia</taxon>
        <taxon>Eutheria</taxon>
        <taxon>Euarchontoglires</taxon>
        <taxon>Glires</taxon>
        <taxon>Rodentia</taxon>
        <taxon>Myomorpha</taxon>
        <taxon>Muroidea</taxon>
        <taxon>Muridae</taxon>
        <taxon>Murinae</taxon>
        <taxon>Mus</taxon>
        <taxon>Mus</taxon>
    </lineage>
</organism>
<accession>P61982</accession>
<accession>O70457</accession>
<accession>P35214</accession>
<accession>Q3UFD6</accession>
<accession>Q4FK44</accession>
<accession>Q9UDP2</accession>
<accession>Q9UN99</accession>
<feature type="chain" id="PRO_0000058607" description="14-3-3 protein gamma">
    <location>
        <begin position="1"/>
        <end position="247"/>
    </location>
</feature>
<feature type="initiator methionine" description="Removed; alternate" evidence="1">
    <location>
        <position position="1"/>
    </location>
</feature>
<feature type="chain" id="PRO_0000367908" description="14-3-3 protein gamma, N-terminally processed">
    <location>
        <begin position="2"/>
        <end position="247"/>
    </location>
</feature>
<feature type="region of interest" description="Interaction with SPATA18/MIEAP" evidence="1">
    <location>
        <begin position="2"/>
        <end position="247"/>
    </location>
</feature>
<feature type="site" description="Interaction with phosphoserine on interacting protein" evidence="1">
    <location>
        <position position="57"/>
    </location>
</feature>
<feature type="site" description="Interaction with phosphoserine on interacting protein" evidence="1">
    <location>
        <position position="132"/>
    </location>
</feature>
<feature type="modified residue" description="N-acetylmethionine" evidence="1">
    <location>
        <position position="1"/>
    </location>
</feature>
<feature type="modified residue" description="N-acetylvaline; in 14-3-3 protein gamma, N-terminally processed" evidence="1">
    <location>
        <position position="2"/>
    </location>
</feature>
<feature type="modified residue" description="Phosphoserine" evidence="9">
    <location>
        <position position="71"/>
    </location>
</feature>
<feature type="modified residue" description="Phosphotyrosine" evidence="2">
    <location>
        <position position="133"/>
    </location>
</feature>
<feature type="modified residue" description="Phosphothreonine" evidence="1">
    <location>
        <position position="145"/>
    </location>
</feature>
<feature type="modified residue" description="Phosphoserine" evidence="2">
    <location>
        <position position="215"/>
    </location>
</feature>
<feature type="modified residue" description="Phosphothreonine" evidence="1">
    <location>
        <position position="234"/>
    </location>
</feature>
<feature type="modified residue" description="Phosphoserine" evidence="1">
    <location>
        <position position="235"/>
    </location>
</feature>
<feature type="sequence conflict" description="In Ref. 1; AAC14345." evidence="7" ref="1">
    <original>S</original>
    <variation>F</variation>
    <location>
        <position position="150"/>
    </location>
</feature>
<feature type="helix" evidence="10">
    <location>
        <begin position="3"/>
        <end position="17"/>
    </location>
</feature>
<feature type="helix" evidence="10">
    <location>
        <begin position="20"/>
        <end position="33"/>
    </location>
</feature>
<feature type="helix" evidence="10">
    <location>
        <begin position="39"/>
        <end position="70"/>
    </location>
</feature>
<feature type="turn" evidence="10">
    <location>
        <begin position="71"/>
        <end position="73"/>
    </location>
</feature>
<feature type="helix" evidence="10">
    <location>
        <begin position="78"/>
        <end position="111"/>
    </location>
</feature>
<feature type="helix" evidence="10">
    <location>
        <begin position="118"/>
        <end position="135"/>
    </location>
</feature>
<feature type="helix" evidence="10">
    <location>
        <begin position="141"/>
        <end position="164"/>
    </location>
</feature>
<feature type="helix" evidence="10">
    <location>
        <begin position="170"/>
        <end position="185"/>
    </location>
</feature>
<feature type="helix" evidence="10">
    <location>
        <begin position="192"/>
        <end position="206"/>
    </location>
</feature>
<feature type="helix" evidence="10">
    <location>
        <begin position="208"/>
        <end position="211"/>
    </location>
</feature>
<feature type="turn" evidence="10">
    <location>
        <begin position="212"/>
        <end position="215"/>
    </location>
</feature>
<feature type="helix" evidence="10">
    <location>
        <begin position="216"/>
        <end position="235"/>
    </location>
</feature>